<dbReference type="EC" id="4.2.1.11" evidence="1"/>
<dbReference type="EMBL" id="CP001182">
    <property type="protein sequence ID" value="ACJ41603.1"/>
    <property type="molecule type" value="Genomic_DNA"/>
</dbReference>
<dbReference type="RefSeq" id="WP_000078452.1">
    <property type="nucleotide sequence ID" value="NC_011586.2"/>
</dbReference>
<dbReference type="SMR" id="B7I918"/>
<dbReference type="GeneID" id="92894149"/>
<dbReference type="KEGG" id="abn:AB57_2230"/>
<dbReference type="HOGENOM" id="CLU_031223_2_1_6"/>
<dbReference type="UniPathway" id="UPA00109">
    <property type="reaction ID" value="UER00187"/>
</dbReference>
<dbReference type="Proteomes" id="UP000007094">
    <property type="component" value="Chromosome"/>
</dbReference>
<dbReference type="GO" id="GO:0009986">
    <property type="term" value="C:cell surface"/>
    <property type="evidence" value="ECO:0007669"/>
    <property type="project" value="UniProtKB-SubCell"/>
</dbReference>
<dbReference type="GO" id="GO:0005576">
    <property type="term" value="C:extracellular region"/>
    <property type="evidence" value="ECO:0007669"/>
    <property type="project" value="UniProtKB-SubCell"/>
</dbReference>
<dbReference type="GO" id="GO:0000015">
    <property type="term" value="C:phosphopyruvate hydratase complex"/>
    <property type="evidence" value="ECO:0007669"/>
    <property type="project" value="InterPro"/>
</dbReference>
<dbReference type="GO" id="GO:0000287">
    <property type="term" value="F:magnesium ion binding"/>
    <property type="evidence" value="ECO:0007669"/>
    <property type="project" value="UniProtKB-UniRule"/>
</dbReference>
<dbReference type="GO" id="GO:0004634">
    <property type="term" value="F:phosphopyruvate hydratase activity"/>
    <property type="evidence" value="ECO:0007669"/>
    <property type="project" value="UniProtKB-UniRule"/>
</dbReference>
<dbReference type="GO" id="GO:0006096">
    <property type="term" value="P:glycolytic process"/>
    <property type="evidence" value="ECO:0007669"/>
    <property type="project" value="UniProtKB-UniRule"/>
</dbReference>
<dbReference type="CDD" id="cd03313">
    <property type="entry name" value="enolase"/>
    <property type="match status" value="1"/>
</dbReference>
<dbReference type="FunFam" id="3.20.20.120:FF:000001">
    <property type="entry name" value="Enolase"/>
    <property type="match status" value="1"/>
</dbReference>
<dbReference type="FunFam" id="3.30.390.10:FF:000001">
    <property type="entry name" value="Enolase"/>
    <property type="match status" value="1"/>
</dbReference>
<dbReference type="Gene3D" id="3.20.20.120">
    <property type="entry name" value="Enolase-like C-terminal domain"/>
    <property type="match status" value="1"/>
</dbReference>
<dbReference type="Gene3D" id="3.30.390.10">
    <property type="entry name" value="Enolase-like, N-terminal domain"/>
    <property type="match status" value="1"/>
</dbReference>
<dbReference type="HAMAP" id="MF_00318">
    <property type="entry name" value="Enolase"/>
    <property type="match status" value="1"/>
</dbReference>
<dbReference type="InterPro" id="IPR000941">
    <property type="entry name" value="Enolase"/>
</dbReference>
<dbReference type="InterPro" id="IPR036849">
    <property type="entry name" value="Enolase-like_C_sf"/>
</dbReference>
<dbReference type="InterPro" id="IPR029017">
    <property type="entry name" value="Enolase-like_N"/>
</dbReference>
<dbReference type="InterPro" id="IPR020810">
    <property type="entry name" value="Enolase_C"/>
</dbReference>
<dbReference type="InterPro" id="IPR020809">
    <property type="entry name" value="Enolase_CS"/>
</dbReference>
<dbReference type="InterPro" id="IPR020811">
    <property type="entry name" value="Enolase_N"/>
</dbReference>
<dbReference type="NCBIfam" id="TIGR01060">
    <property type="entry name" value="eno"/>
    <property type="match status" value="1"/>
</dbReference>
<dbReference type="PANTHER" id="PTHR11902">
    <property type="entry name" value="ENOLASE"/>
    <property type="match status" value="1"/>
</dbReference>
<dbReference type="PANTHER" id="PTHR11902:SF1">
    <property type="entry name" value="ENOLASE"/>
    <property type="match status" value="1"/>
</dbReference>
<dbReference type="Pfam" id="PF00113">
    <property type="entry name" value="Enolase_C"/>
    <property type="match status" value="1"/>
</dbReference>
<dbReference type="Pfam" id="PF03952">
    <property type="entry name" value="Enolase_N"/>
    <property type="match status" value="1"/>
</dbReference>
<dbReference type="PIRSF" id="PIRSF001400">
    <property type="entry name" value="Enolase"/>
    <property type="match status" value="1"/>
</dbReference>
<dbReference type="PRINTS" id="PR00148">
    <property type="entry name" value="ENOLASE"/>
</dbReference>
<dbReference type="SFLD" id="SFLDF00002">
    <property type="entry name" value="enolase"/>
    <property type="match status" value="1"/>
</dbReference>
<dbReference type="SFLD" id="SFLDG00178">
    <property type="entry name" value="enolase"/>
    <property type="match status" value="1"/>
</dbReference>
<dbReference type="SMART" id="SM01192">
    <property type="entry name" value="Enolase_C"/>
    <property type="match status" value="1"/>
</dbReference>
<dbReference type="SMART" id="SM01193">
    <property type="entry name" value="Enolase_N"/>
    <property type="match status" value="1"/>
</dbReference>
<dbReference type="SUPFAM" id="SSF51604">
    <property type="entry name" value="Enolase C-terminal domain-like"/>
    <property type="match status" value="1"/>
</dbReference>
<dbReference type="SUPFAM" id="SSF54826">
    <property type="entry name" value="Enolase N-terminal domain-like"/>
    <property type="match status" value="1"/>
</dbReference>
<dbReference type="PROSITE" id="PS00164">
    <property type="entry name" value="ENOLASE"/>
    <property type="match status" value="1"/>
</dbReference>
<protein>
    <recommendedName>
        <fullName evidence="1">Enolase</fullName>
        <ecNumber evidence="1">4.2.1.11</ecNumber>
    </recommendedName>
    <alternativeName>
        <fullName evidence="1">2-phospho-D-glycerate hydro-lyase</fullName>
    </alternativeName>
    <alternativeName>
        <fullName evidence="1">2-phosphoglycerate dehydratase</fullName>
    </alternativeName>
</protein>
<comment type="function">
    <text evidence="1">Catalyzes the reversible conversion of 2-phosphoglycerate (2-PG) into phosphoenolpyruvate (PEP). It is essential for the degradation of carbohydrates via glycolysis.</text>
</comment>
<comment type="catalytic activity">
    <reaction evidence="1">
        <text>(2R)-2-phosphoglycerate = phosphoenolpyruvate + H2O</text>
        <dbReference type="Rhea" id="RHEA:10164"/>
        <dbReference type="ChEBI" id="CHEBI:15377"/>
        <dbReference type="ChEBI" id="CHEBI:58289"/>
        <dbReference type="ChEBI" id="CHEBI:58702"/>
        <dbReference type="EC" id="4.2.1.11"/>
    </reaction>
</comment>
<comment type="cofactor">
    <cofactor evidence="1">
        <name>Mg(2+)</name>
        <dbReference type="ChEBI" id="CHEBI:18420"/>
    </cofactor>
    <text evidence="1">Binds a second Mg(2+) ion via substrate during catalysis.</text>
</comment>
<comment type="pathway">
    <text evidence="1">Carbohydrate degradation; glycolysis; pyruvate from D-glyceraldehyde 3-phosphate: step 4/5.</text>
</comment>
<comment type="subunit">
    <text evidence="1">Component of the RNA degradosome, a multiprotein complex involved in RNA processing and mRNA degradation.</text>
</comment>
<comment type="subcellular location">
    <subcellularLocation>
        <location evidence="1">Cytoplasm</location>
    </subcellularLocation>
    <subcellularLocation>
        <location evidence="1">Secreted</location>
    </subcellularLocation>
    <subcellularLocation>
        <location evidence="1">Cell surface</location>
    </subcellularLocation>
    <text evidence="1">Fractions of enolase are present in both the cytoplasm and on the cell surface.</text>
</comment>
<comment type="similarity">
    <text evidence="1">Belongs to the enolase family.</text>
</comment>
<accession>B7I918</accession>
<sequence length="429" mass="46216">MSQIVDIRAREILDSRGNPTIEADVILESGVVGRACAPSGASTGSREALELRDGDKSRYLGKGVRTAVQNVNSSIHELLVGQSVFEQKALDEKMIAFDGTENKSKLGANATLAVSLAAAHAAAAEQKLPLFQYIANLRGQTTLTMPVPMMNILNGGAHADNTVDIQEFMIEPVGFTSFAEALRAGAEVFHSLKSVLKKQGLNTAVGDEGGFAPNLRSNEEAITVILQAIEQTGYKAGSDIMLALDCASSEFYKNGQYILEGEGNKSFTSNQFADYLAGLVKQYPIISIEDGLDESDWEGWSYLTSILGDKIQLVGDDLFVTNPKILQRGIDEKVGNSILIKYNQIGTLTETLDAIYLAKANGYTTVISHRSGETEDSTIADLAVGTAAGQIKTGSLCRSDRVSKYNQLLRIEELTKAVYRGKAEFKGLN</sequence>
<gene>
    <name evidence="1" type="primary">eno</name>
    <name type="ordered locus">AB57_2230</name>
</gene>
<keyword id="KW-0963">Cytoplasm</keyword>
<keyword id="KW-0324">Glycolysis</keyword>
<keyword id="KW-0456">Lyase</keyword>
<keyword id="KW-0460">Magnesium</keyword>
<keyword id="KW-0479">Metal-binding</keyword>
<keyword id="KW-0964">Secreted</keyword>
<proteinExistence type="inferred from homology"/>
<feature type="chain" id="PRO_1000132972" description="Enolase">
    <location>
        <begin position="1"/>
        <end position="429"/>
    </location>
</feature>
<feature type="active site" description="Proton donor" evidence="1">
    <location>
        <position position="208"/>
    </location>
</feature>
<feature type="active site" description="Proton acceptor" evidence="1">
    <location>
        <position position="341"/>
    </location>
</feature>
<feature type="binding site" evidence="1">
    <location>
        <position position="166"/>
    </location>
    <ligand>
        <name>(2R)-2-phosphoglycerate</name>
        <dbReference type="ChEBI" id="CHEBI:58289"/>
    </ligand>
</feature>
<feature type="binding site" evidence="1">
    <location>
        <position position="245"/>
    </location>
    <ligand>
        <name>Mg(2+)</name>
        <dbReference type="ChEBI" id="CHEBI:18420"/>
    </ligand>
</feature>
<feature type="binding site" evidence="1">
    <location>
        <position position="289"/>
    </location>
    <ligand>
        <name>Mg(2+)</name>
        <dbReference type="ChEBI" id="CHEBI:18420"/>
    </ligand>
</feature>
<feature type="binding site" evidence="1">
    <location>
        <position position="316"/>
    </location>
    <ligand>
        <name>Mg(2+)</name>
        <dbReference type="ChEBI" id="CHEBI:18420"/>
    </ligand>
</feature>
<feature type="binding site" evidence="1">
    <location>
        <position position="341"/>
    </location>
    <ligand>
        <name>(2R)-2-phosphoglycerate</name>
        <dbReference type="ChEBI" id="CHEBI:58289"/>
    </ligand>
</feature>
<feature type="binding site" evidence="1">
    <location>
        <position position="370"/>
    </location>
    <ligand>
        <name>(2R)-2-phosphoglycerate</name>
        <dbReference type="ChEBI" id="CHEBI:58289"/>
    </ligand>
</feature>
<feature type="binding site" evidence="1">
    <location>
        <position position="371"/>
    </location>
    <ligand>
        <name>(2R)-2-phosphoglycerate</name>
        <dbReference type="ChEBI" id="CHEBI:58289"/>
    </ligand>
</feature>
<feature type="binding site" evidence="1">
    <location>
        <position position="392"/>
    </location>
    <ligand>
        <name>(2R)-2-phosphoglycerate</name>
        <dbReference type="ChEBI" id="CHEBI:58289"/>
    </ligand>
</feature>
<name>ENO_ACIB5</name>
<reference key="1">
    <citation type="journal article" date="2008" name="J. Bacteriol.">
        <title>Comparative genome sequence analysis of multidrug-resistant Acinetobacter baumannii.</title>
        <authorList>
            <person name="Adams M.D."/>
            <person name="Goglin K."/>
            <person name="Molyneaux N."/>
            <person name="Hujer K.M."/>
            <person name="Lavender H."/>
            <person name="Jamison J.J."/>
            <person name="MacDonald I.J."/>
            <person name="Martin K.M."/>
            <person name="Russo T."/>
            <person name="Campagnari A.A."/>
            <person name="Hujer A.M."/>
            <person name="Bonomo R.A."/>
            <person name="Gill S.R."/>
        </authorList>
    </citation>
    <scope>NUCLEOTIDE SEQUENCE [LARGE SCALE GENOMIC DNA]</scope>
    <source>
        <strain>AB0057</strain>
    </source>
</reference>
<evidence type="ECO:0000255" key="1">
    <source>
        <dbReference type="HAMAP-Rule" id="MF_00318"/>
    </source>
</evidence>
<organism>
    <name type="scientific">Acinetobacter baumannii (strain AB0057)</name>
    <dbReference type="NCBI Taxonomy" id="480119"/>
    <lineage>
        <taxon>Bacteria</taxon>
        <taxon>Pseudomonadati</taxon>
        <taxon>Pseudomonadota</taxon>
        <taxon>Gammaproteobacteria</taxon>
        <taxon>Moraxellales</taxon>
        <taxon>Moraxellaceae</taxon>
        <taxon>Acinetobacter</taxon>
        <taxon>Acinetobacter calcoaceticus/baumannii complex</taxon>
    </lineage>
</organism>